<accession>C1FUP2</accession>
<organism>
    <name type="scientific">Clostridium botulinum (strain Kyoto / Type A2)</name>
    <dbReference type="NCBI Taxonomy" id="536232"/>
    <lineage>
        <taxon>Bacteria</taxon>
        <taxon>Bacillati</taxon>
        <taxon>Bacillota</taxon>
        <taxon>Clostridia</taxon>
        <taxon>Eubacteriales</taxon>
        <taxon>Clostridiaceae</taxon>
        <taxon>Clostridium</taxon>
    </lineage>
</organism>
<name>COBS_CLOBJ</name>
<reference key="1">
    <citation type="submission" date="2008-10" db="EMBL/GenBank/DDBJ databases">
        <title>Genome sequence of Clostridium botulinum A2 Kyoto.</title>
        <authorList>
            <person name="Shrivastava S."/>
            <person name="Brinkac L.M."/>
            <person name="Brown J.L."/>
            <person name="Bruce D."/>
            <person name="Detter C.C."/>
            <person name="Johnson E.A."/>
            <person name="Munk C.A."/>
            <person name="Smith L.A."/>
            <person name="Smith T.J."/>
            <person name="Sutton G."/>
            <person name="Brettin T.S."/>
        </authorList>
    </citation>
    <scope>NUCLEOTIDE SEQUENCE [LARGE SCALE GENOMIC DNA]</scope>
    <source>
        <strain>Kyoto / Type A2</strain>
    </source>
</reference>
<proteinExistence type="inferred from homology"/>
<comment type="function">
    <text evidence="1">Joins adenosylcobinamide-GDP and alpha-ribazole to generate adenosylcobalamin (Ado-cobalamin). Also synthesizes adenosylcobalamin 5'-phosphate from adenosylcobinamide-GDP and alpha-ribazole 5'-phosphate.</text>
</comment>
<comment type="catalytic activity">
    <reaction evidence="1">
        <text>alpha-ribazole + adenosylcob(III)inamide-GDP = adenosylcob(III)alamin + GMP + H(+)</text>
        <dbReference type="Rhea" id="RHEA:16049"/>
        <dbReference type="ChEBI" id="CHEBI:10329"/>
        <dbReference type="ChEBI" id="CHEBI:15378"/>
        <dbReference type="ChEBI" id="CHEBI:18408"/>
        <dbReference type="ChEBI" id="CHEBI:58115"/>
        <dbReference type="ChEBI" id="CHEBI:60487"/>
        <dbReference type="EC" id="2.7.8.26"/>
    </reaction>
</comment>
<comment type="catalytic activity">
    <reaction evidence="1">
        <text>alpha-ribazole 5'-phosphate + adenosylcob(III)inamide-GDP = adenosylcob(III)alamin 5'-phosphate + GMP + H(+)</text>
        <dbReference type="Rhea" id="RHEA:23560"/>
        <dbReference type="ChEBI" id="CHEBI:15378"/>
        <dbReference type="ChEBI" id="CHEBI:57918"/>
        <dbReference type="ChEBI" id="CHEBI:58115"/>
        <dbReference type="ChEBI" id="CHEBI:60487"/>
        <dbReference type="ChEBI" id="CHEBI:60493"/>
        <dbReference type="EC" id="2.7.8.26"/>
    </reaction>
</comment>
<comment type="cofactor">
    <cofactor evidence="1">
        <name>Mg(2+)</name>
        <dbReference type="ChEBI" id="CHEBI:18420"/>
    </cofactor>
</comment>
<comment type="pathway">
    <text evidence="1">Cofactor biosynthesis; adenosylcobalamin biosynthesis; adenosylcobalamin from cob(II)yrinate a,c-diamide: step 7/7.</text>
</comment>
<comment type="subcellular location">
    <subcellularLocation>
        <location evidence="1">Cell membrane</location>
        <topology evidence="1">Multi-pass membrane protein</topology>
    </subcellularLocation>
</comment>
<comment type="similarity">
    <text evidence="1">Belongs to the CobS family.</text>
</comment>
<keyword id="KW-1003">Cell membrane</keyword>
<keyword id="KW-0169">Cobalamin biosynthesis</keyword>
<keyword id="KW-0460">Magnesium</keyword>
<keyword id="KW-0472">Membrane</keyword>
<keyword id="KW-0808">Transferase</keyword>
<keyword id="KW-0812">Transmembrane</keyword>
<keyword id="KW-1133">Transmembrane helix</keyword>
<feature type="chain" id="PRO_1000148018" description="Adenosylcobinamide-GDP ribazoletransferase">
    <location>
        <begin position="1"/>
        <end position="248"/>
    </location>
</feature>
<feature type="transmembrane region" description="Helical" evidence="1">
    <location>
        <begin position="36"/>
        <end position="56"/>
    </location>
</feature>
<feature type="transmembrane region" description="Helical" evidence="1">
    <location>
        <begin position="59"/>
        <end position="79"/>
    </location>
</feature>
<feature type="transmembrane region" description="Helical" evidence="1">
    <location>
        <begin position="114"/>
        <end position="134"/>
    </location>
</feature>
<feature type="transmembrane region" description="Helical" evidence="1">
    <location>
        <begin position="137"/>
        <end position="157"/>
    </location>
</feature>
<feature type="transmembrane region" description="Helical" evidence="1">
    <location>
        <begin position="170"/>
        <end position="190"/>
    </location>
</feature>
<feature type="transmembrane region" description="Helical" evidence="1">
    <location>
        <begin position="199"/>
        <end position="219"/>
    </location>
</feature>
<dbReference type="EC" id="2.7.8.26" evidence="1"/>
<dbReference type="EMBL" id="CP001581">
    <property type="protein sequence ID" value="ACO85197.1"/>
    <property type="molecule type" value="Genomic_DNA"/>
</dbReference>
<dbReference type="RefSeq" id="WP_012704629.1">
    <property type="nucleotide sequence ID" value="NC_012563.1"/>
</dbReference>
<dbReference type="KEGG" id="cby:CLM_0963"/>
<dbReference type="eggNOG" id="COG0368">
    <property type="taxonomic scope" value="Bacteria"/>
</dbReference>
<dbReference type="HOGENOM" id="CLU_057426_1_1_9"/>
<dbReference type="UniPathway" id="UPA00148">
    <property type="reaction ID" value="UER00238"/>
</dbReference>
<dbReference type="Proteomes" id="UP000001374">
    <property type="component" value="Chromosome"/>
</dbReference>
<dbReference type="GO" id="GO:0005886">
    <property type="term" value="C:plasma membrane"/>
    <property type="evidence" value="ECO:0007669"/>
    <property type="project" value="UniProtKB-SubCell"/>
</dbReference>
<dbReference type="GO" id="GO:0051073">
    <property type="term" value="F:adenosylcobinamide-GDP ribazoletransferase activity"/>
    <property type="evidence" value="ECO:0007669"/>
    <property type="project" value="UniProtKB-UniRule"/>
</dbReference>
<dbReference type="GO" id="GO:0008818">
    <property type="term" value="F:cobalamin 5'-phosphate synthase activity"/>
    <property type="evidence" value="ECO:0007669"/>
    <property type="project" value="UniProtKB-UniRule"/>
</dbReference>
<dbReference type="GO" id="GO:0009236">
    <property type="term" value="P:cobalamin biosynthetic process"/>
    <property type="evidence" value="ECO:0007669"/>
    <property type="project" value="UniProtKB-UniRule"/>
</dbReference>
<dbReference type="HAMAP" id="MF_00719">
    <property type="entry name" value="CobS"/>
    <property type="match status" value="1"/>
</dbReference>
<dbReference type="InterPro" id="IPR003805">
    <property type="entry name" value="CobS"/>
</dbReference>
<dbReference type="NCBIfam" id="TIGR00317">
    <property type="entry name" value="cobS"/>
    <property type="match status" value="1"/>
</dbReference>
<dbReference type="PANTHER" id="PTHR34148">
    <property type="entry name" value="ADENOSYLCOBINAMIDE-GDP RIBAZOLETRANSFERASE"/>
    <property type="match status" value="1"/>
</dbReference>
<dbReference type="PANTHER" id="PTHR34148:SF1">
    <property type="entry name" value="ADENOSYLCOBINAMIDE-GDP RIBAZOLETRANSFERASE"/>
    <property type="match status" value="1"/>
</dbReference>
<dbReference type="Pfam" id="PF02654">
    <property type="entry name" value="CobS"/>
    <property type="match status" value="1"/>
</dbReference>
<protein>
    <recommendedName>
        <fullName evidence="1">Adenosylcobinamide-GDP ribazoletransferase</fullName>
        <ecNumber evidence="1">2.7.8.26</ecNumber>
    </recommendedName>
    <alternativeName>
        <fullName evidence="1">Cobalamin synthase</fullName>
    </alternativeName>
    <alternativeName>
        <fullName evidence="1">Cobalamin-5'-phosphate synthase</fullName>
    </alternativeName>
</protein>
<evidence type="ECO:0000255" key="1">
    <source>
        <dbReference type="HAMAP-Rule" id="MF_00719"/>
    </source>
</evidence>
<sequence>MKSILNDFLLMIQFFTRIPINKNLQCEKVNFRRGAFFLPVVAFIIGGMEFLIYLGLKNFLPANVIIVLLILFTAMVTGGLHMDGLADTCDGFFSLRDKERIIEIMKDSRIGSYGTIALIIDLLLKYQLLYSLVLKGYSIAIVLAPIIGRISILFLCLSKRTAKKNGSGNIFIGNMSKPIVFFITTIILALSTYFLGLRATIIPFIGALLITYLLYLLCLNKINGLTGDTLGACNELGEITFLLILLMM</sequence>
<gene>
    <name evidence="1" type="primary">cobS</name>
    <name type="ordered locus">CLM_0963</name>
</gene>